<keyword id="KW-0256">Endoplasmic reticulum</keyword>
<keyword id="KW-0472">Membrane</keyword>
<keyword id="KW-1185">Reference proteome</keyword>
<keyword id="KW-0812">Transmembrane</keyword>
<keyword id="KW-1133">Transmembrane helix</keyword>
<organism>
    <name type="scientific">Schizosaccharomyces pombe (strain 972 / ATCC 24843)</name>
    <name type="common">Fission yeast</name>
    <dbReference type="NCBI Taxonomy" id="284812"/>
    <lineage>
        <taxon>Eukaryota</taxon>
        <taxon>Fungi</taxon>
        <taxon>Dikarya</taxon>
        <taxon>Ascomycota</taxon>
        <taxon>Taphrinomycotina</taxon>
        <taxon>Schizosaccharomycetes</taxon>
        <taxon>Schizosaccharomycetales</taxon>
        <taxon>Schizosaccharomycetaceae</taxon>
        <taxon>Schizosaccharomyces</taxon>
    </lineage>
</organism>
<name>YHKH_SCHPO</name>
<evidence type="ECO:0000255" key="1"/>
<evidence type="ECO:0000269" key="2">
    <source>
    </source>
</evidence>
<protein>
    <recommendedName>
        <fullName>Uncharacterized membrane protein C660.17c</fullName>
    </recommendedName>
</protein>
<proteinExistence type="predicted"/>
<reference key="1">
    <citation type="journal article" date="2002" name="Nature">
        <title>The genome sequence of Schizosaccharomyces pombe.</title>
        <authorList>
            <person name="Wood V."/>
            <person name="Gwilliam R."/>
            <person name="Rajandream M.A."/>
            <person name="Lyne M.H."/>
            <person name="Lyne R."/>
            <person name="Stewart A."/>
            <person name="Sgouros J.G."/>
            <person name="Peat N."/>
            <person name="Hayles J."/>
            <person name="Baker S.G."/>
            <person name="Basham D."/>
            <person name="Bowman S."/>
            <person name="Brooks K."/>
            <person name="Brown D."/>
            <person name="Brown S."/>
            <person name="Chillingworth T."/>
            <person name="Churcher C.M."/>
            <person name="Collins M."/>
            <person name="Connor R."/>
            <person name="Cronin A."/>
            <person name="Davis P."/>
            <person name="Feltwell T."/>
            <person name="Fraser A."/>
            <person name="Gentles S."/>
            <person name="Goble A."/>
            <person name="Hamlin N."/>
            <person name="Harris D.E."/>
            <person name="Hidalgo J."/>
            <person name="Hodgson G."/>
            <person name="Holroyd S."/>
            <person name="Hornsby T."/>
            <person name="Howarth S."/>
            <person name="Huckle E.J."/>
            <person name="Hunt S."/>
            <person name="Jagels K."/>
            <person name="James K.D."/>
            <person name="Jones L."/>
            <person name="Jones M."/>
            <person name="Leather S."/>
            <person name="McDonald S."/>
            <person name="McLean J."/>
            <person name="Mooney P."/>
            <person name="Moule S."/>
            <person name="Mungall K.L."/>
            <person name="Murphy L.D."/>
            <person name="Niblett D."/>
            <person name="Odell C."/>
            <person name="Oliver K."/>
            <person name="O'Neil S."/>
            <person name="Pearson D."/>
            <person name="Quail M.A."/>
            <person name="Rabbinowitsch E."/>
            <person name="Rutherford K.M."/>
            <person name="Rutter S."/>
            <person name="Saunders D."/>
            <person name="Seeger K."/>
            <person name="Sharp S."/>
            <person name="Skelton J."/>
            <person name="Simmonds M.N."/>
            <person name="Squares R."/>
            <person name="Squares S."/>
            <person name="Stevens K."/>
            <person name="Taylor K."/>
            <person name="Taylor R.G."/>
            <person name="Tivey A."/>
            <person name="Walsh S.V."/>
            <person name="Warren T."/>
            <person name="Whitehead S."/>
            <person name="Woodward J.R."/>
            <person name="Volckaert G."/>
            <person name="Aert R."/>
            <person name="Robben J."/>
            <person name="Grymonprez B."/>
            <person name="Weltjens I."/>
            <person name="Vanstreels E."/>
            <person name="Rieger M."/>
            <person name="Schaefer M."/>
            <person name="Mueller-Auer S."/>
            <person name="Gabel C."/>
            <person name="Fuchs M."/>
            <person name="Duesterhoeft A."/>
            <person name="Fritzc C."/>
            <person name="Holzer E."/>
            <person name="Moestl D."/>
            <person name="Hilbert H."/>
            <person name="Borzym K."/>
            <person name="Langer I."/>
            <person name="Beck A."/>
            <person name="Lehrach H."/>
            <person name="Reinhardt R."/>
            <person name="Pohl T.M."/>
            <person name="Eger P."/>
            <person name="Zimmermann W."/>
            <person name="Wedler H."/>
            <person name="Wambutt R."/>
            <person name="Purnelle B."/>
            <person name="Goffeau A."/>
            <person name="Cadieu E."/>
            <person name="Dreano S."/>
            <person name="Gloux S."/>
            <person name="Lelaure V."/>
            <person name="Mottier S."/>
            <person name="Galibert F."/>
            <person name="Aves S.J."/>
            <person name="Xiang Z."/>
            <person name="Hunt C."/>
            <person name="Moore K."/>
            <person name="Hurst S.M."/>
            <person name="Lucas M."/>
            <person name="Rochet M."/>
            <person name="Gaillardin C."/>
            <person name="Tallada V.A."/>
            <person name="Garzon A."/>
            <person name="Thode G."/>
            <person name="Daga R.R."/>
            <person name="Cruzado L."/>
            <person name="Jimenez J."/>
            <person name="Sanchez M."/>
            <person name="del Rey F."/>
            <person name="Benito J."/>
            <person name="Dominguez A."/>
            <person name="Revuelta J.L."/>
            <person name="Moreno S."/>
            <person name="Armstrong J."/>
            <person name="Forsburg S.L."/>
            <person name="Cerutti L."/>
            <person name="Lowe T."/>
            <person name="McCombie W.R."/>
            <person name="Paulsen I."/>
            <person name="Potashkin J."/>
            <person name="Shpakovski G.V."/>
            <person name="Ussery D."/>
            <person name="Barrell B.G."/>
            <person name="Nurse P."/>
        </authorList>
    </citation>
    <scope>NUCLEOTIDE SEQUENCE [LARGE SCALE GENOMIC DNA]</scope>
    <source>
        <strain>972 / ATCC 24843</strain>
    </source>
</reference>
<reference key="2">
    <citation type="journal article" date="2006" name="Nat. Biotechnol.">
        <title>ORFeome cloning and global analysis of protein localization in the fission yeast Schizosaccharomyces pombe.</title>
        <authorList>
            <person name="Matsuyama A."/>
            <person name="Arai R."/>
            <person name="Yashiroda Y."/>
            <person name="Shirai A."/>
            <person name="Kamata A."/>
            <person name="Sekido S."/>
            <person name="Kobayashi Y."/>
            <person name="Hashimoto A."/>
            <person name="Hamamoto M."/>
            <person name="Hiraoka Y."/>
            <person name="Horinouchi S."/>
            <person name="Yoshida M."/>
        </authorList>
    </citation>
    <scope>SUBCELLULAR LOCATION [LARGE SCALE ANALYSIS]</scope>
</reference>
<dbReference type="EMBL" id="CU329671">
    <property type="protein sequence ID" value="CAA22537.1"/>
    <property type="molecule type" value="Genomic_DNA"/>
</dbReference>
<dbReference type="PIR" id="T40629">
    <property type="entry name" value="T40629"/>
</dbReference>
<dbReference type="RefSeq" id="NP_595096.1">
    <property type="nucleotide sequence ID" value="NM_001021003.2"/>
</dbReference>
<dbReference type="SMR" id="O94433"/>
<dbReference type="BioGRID" id="277096">
    <property type="interactions" value="17"/>
</dbReference>
<dbReference type="STRING" id="284812.O94433"/>
<dbReference type="iPTMnet" id="O94433"/>
<dbReference type="PaxDb" id="4896-SPBC660.17c.1"/>
<dbReference type="EnsemblFungi" id="SPBC660.17c.1">
    <property type="protein sequence ID" value="SPBC660.17c.1:pep"/>
    <property type="gene ID" value="SPBC660.17c"/>
</dbReference>
<dbReference type="KEGG" id="spo:2540569"/>
<dbReference type="PomBase" id="SPBC660.17c"/>
<dbReference type="VEuPathDB" id="FungiDB:SPBC660.17c"/>
<dbReference type="HOGENOM" id="CLU_1556160_0_0_1"/>
<dbReference type="InParanoid" id="O94433"/>
<dbReference type="OMA" id="TNARDNR"/>
<dbReference type="PRO" id="PR:O94433"/>
<dbReference type="Proteomes" id="UP000002485">
    <property type="component" value="Chromosome II"/>
</dbReference>
<dbReference type="GO" id="GO:0005783">
    <property type="term" value="C:endoplasmic reticulum"/>
    <property type="evidence" value="ECO:0007005"/>
    <property type="project" value="PomBase"/>
</dbReference>
<dbReference type="GO" id="GO:0005789">
    <property type="term" value="C:endoplasmic reticulum membrane"/>
    <property type="evidence" value="ECO:0007669"/>
    <property type="project" value="UniProtKB-SubCell"/>
</dbReference>
<comment type="subcellular location">
    <subcellularLocation>
        <location evidence="2">Endoplasmic reticulum membrane</location>
        <topology evidence="2">Multi-pass membrane protein</topology>
    </subcellularLocation>
</comment>
<accession>O94433</accession>
<feature type="chain" id="PRO_0000304082" description="Uncharacterized membrane protein C660.17c">
    <location>
        <begin position="1"/>
        <end position="172"/>
    </location>
</feature>
<feature type="transmembrane region" description="Helical" evidence="1">
    <location>
        <begin position="46"/>
        <end position="66"/>
    </location>
</feature>
<feature type="transmembrane region" description="Helical" evidence="1">
    <location>
        <begin position="76"/>
        <end position="96"/>
    </location>
</feature>
<feature type="transmembrane region" description="Helical" evidence="1">
    <location>
        <begin position="104"/>
        <end position="124"/>
    </location>
</feature>
<feature type="transmembrane region" description="Helical" evidence="1">
    <location>
        <begin position="129"/>
        <end position="149"/>
    </location>
</feature>
<sequence>MEQLRKRVVRFTNNDDDDFEPVFLNEQDQDAFVEQLRLTNNRDNRMFSIIFSFLYLLLIVPLFLYPEYWAFKLVELLSLFYCAYVMYFLPLEVGLFNPKTPNKWKFLFILNIGVTALITVLGWSQHTSFFYAFLNIRTLVCGITIFTEIARYSMYHSTLSVEKLDEMRFAHM</sequence>
<gene>
    <name type="ORF">SPBC660.17c</name>
</gene>